<sequence length="187" mass="19555">MSDDGEQPGPGDGAARDELSGMDLVRRTLAEARAAARARGQDPGRGFAAGPAPRRVAGRRRSWSGPGPDTRDPQPLGKLTRDLAKKRGWSGHVAEGTVLGQWSRVVGAQIADHATPTALNEGVLSVTAESTAWATQLRIMQSQLLAKIAAAVGNGVVTSLKITGPASPSWRKGPRHIAGRGPRDTYG</sequence>
<protein>
    <recommendedName>
        <fullName evidence="1">UPF0232 protein MMAR_0004</fullName>
    </recommendedName>
</protein>
<accession>B2HI49</accession>
<name>Y004_MYCMM</name>
<comment type="similarity">
    <text evidence="1">Belongs to the UPF0232 family.</text>
</comment>
<feature type="chain" id="PRO_1000130584" description="UPF0232 protein MMAR_0004">
    <location>
        <begin position="1"/>
        <end position="187"/>
    </location>
</feature>
<feature type="region of interest" description="Disordered" evidence="2">
    <location>
        <begin position="1"/>
        <end position="77"/>
    </location>
</feature>
<feature type="region of interest" description="Disordered" evidence="2">
    <location>
        <begin position="166"/>
        <end position="187"/>
    </location>
</feature>
<feature type="compositionally biased region" description="Basic and acidic residues" evidence="2">
    <location>
        <begin position="14"/>
        <end position="30"/>
    </location>
</feature>
<feature type="compositionally biased region" description="Low complexity" evidence="2">
    <location>
        <begin position="31"/>
        <end position="55"/>
    </location>
</feature>
<gene>
    <name type="ordered locus">MMAR_0004</name>
</gene>
<organism>
    <name type="scientific">Mycobacterium marinum (strain ATCC BAA-535 / M)</name>
    <dbReference type="NCBI Taxonomy" id="216594"/>
    <lineage>
        <taxon>Bacteria</taxon>
        <taxon>Bacillati</taxon>
        <taxon>Actinomycetota</taxon>
        <taxon>Actinomycetes</taxon>
        <taxon>Mycobacteriales</taxon>
        <taxon>Mycobacteriaceae</taxon>
        <taxon>Mycobacterium</taxon>
        <taxon>Mycobacterium ulcerans group</taxon>
    </lineage>
</organism>
<proteinExistence type="inferred from homology"/>
<evidence type="ECO:0000255" key="1">
    <source>
        <dbReference type="HAMAP-Rule" id="MF_00630"/>
    </source>
</evidence>
<evidence type="ECO:0000256" key="2">
    <source>
        <dbReference type="SAM" id="MobiDB-lite"/>
    </source>
</evidence>
<reference key="1">
    <citation type="journal article" date="2008" name="Genome Res.">
        <title>Insights from the complete genome sequence of Mycobacterium marinum on the evolution of Mycobacterium tuberculosis.</title>
        <authorList>
            <person name="Stinear T.P."/>
            <person name="Seemann T."/>
            <person name="Harrison P.F."/>
            <person name="Jenkin G.A."/>
            <person name="Davies J.K."/>
            <person name="Johnson P.D."/>
            <person name="Abdellah Z."/>
            <person name="Arrowsmith C."/>
            <person name="Chillingworth T."/>
            <person name="Churcher C."/>
            <person name="Clarke K."/>
            <person name="Cronin A."/>
            <person name="Davis P."/>
            <person name="Goodhead I."/>
            <person name="Holroyd N."/>
            <person name="Jagels K."/>
            <person name="Lord A."/>
            <person name="Moule S."/>
            <person name="Mungall K."/>
            <person name="Norbertczak H."/>
            <person name="Quail M.A."/>
            <person name="Rabbinowitsch E."/>
            <person name="Walker D."/>
            <person name="White B."/>
            <person name="Whitehead S."/>
            <person name="Small P.L."/>
            <person name="Brosch R."/>
            <person name="Ramakrishnan L."/>
            <person name="Fischbach M.A."/>
            <person name="Parkhill J."/>
            <person name="Cole S.T."/>
        </authorList>
    </citation>
    <scope>NUCLEOTIDE SEQUENCE [LARGE SCALE GENOMIC DNA]</scope>
    <source>
        <strain>ATCC BAA-535 / M</strain>
    </source>
</reference>
<dbReference type="EMBL" id="CP000854">
    <property type="protein sequence ID" value="ACC38475.1"/>
    <property type="molecule type" value="Genomic_DNA"/>
</dbReference>
<dbReference type="RefSeq" id="WP_012392012.1">
    <property type="nucleotide sequence ID" value="NC_010612.1"/>
</dbReference>
<dbReference type="SMR" id="B2HI49"/>
<dbReference type="STRING" id="216594.MMAR_0004"/>
<dbReference type="KEGG" id="mmi:MMAR_0004"/>
<dbReference type="eggNOG" id="COG5512">
    <property type="taxonomic scope" value="Bacteria"/>
</dbReference>
<dbReference type="HOGENOM" id="CLU_087206_0_1_11"/>
<dbReference type="OrthoDB" id="5516926at2"/>
<dbReference type="Proteomes" id="UP000001190">
    <property type="component" value="Chromosome"/>
</dbReference>
<dbReference type="HAMAP" id="MF_00630">
    <property type="entry name" value="UPF0232"/>
    <property type="match status" value="1"/>
</dbReference>
<dbReference type="InterPro" id="IPR007922">
    <property type="entry name" value="DciA-like"/>
</dbReference>
<dbReference type="InterPro" id="IPR023007">
    <property type="entry name" value="UPF0232_actinobac"/>
</dbReference>
<dbReference type="NCBIfam" id="NF002871">
    <property type="entry name" value="PRK03195.1"/>
    <property type="match status" value="1"/>
</dbReference>
<dbReference type="PANTHER" id="PTHR36456">
    <property type="entry name" value="UPF0232 PROTEIN SCO3875"/>
    <property type="match status" value="1"/>
</dbReference>
<dbReference type="PANTHER" id="PTHR36456:SF1">
    <property type="entry name" value="UPF0232 PROTEIN SCO3875"/>
    <property type="match status" value="1"/>
</dbReference>
<dbReference type="Pfam" id="PF05258">
    <property type="entry name" value="DciA"/>
    <property type="match status" value="1"/>
</dbReference>
<keyword id="KW-1185">Reference proteome</keyword>